<protein>
    <recommendedName>
        <fullName evidence="8">Receptor-binding protein pb5</fullName>
        <shortName evidence="8">RBP-pb5</shortName>
    </recommendedName>
    <alternativeName>
        <fullName>Tail protein pb5</fullName>
    </alternativeName>
</protein>
<gene>
    <name type="primary">oad</name>
    <name evidence="11" type="ORF">T5.157</name>
    <name evidence="12" type="ORF">T5p153</name>
</gene>
<dbReference type="EMBL" id="M62847">
    <property type="protein sequence ID" value="AAA32559.1"/>
    <property type="molecule type" value="Genomic_DNA"/>
</dbReference>
<dbReference type="EMBL" id="AY543070">
    <property type="protein sequence ID" value="AAS77196.1"/>
    <property type="molecule type" value="Genomic_DNA"/>
</dbReference>
<dbReference type="EMBL" id="AY692264">
    <property type="protein sequence ID" value="AAU05292.1"/>
    <property type="molecule type" value="Genomic_DNA"/>
</dbReference>
<dbReference type="EMBL" id="AY587007">
    <property type="protein sequence ID" value="AAX12083.1"/>
    <property type="molecule type" value="Genomic_DNA"/>
</dbReference>
<dbReference type="EMBL" id="X75922">
    <property type="protein sequence ID" value="CAA53526.1"/>
    <property type="molecule type" value="Genomic_DNA"/>
</dbReference>
<dbReference type="PIR" id="A38181">
    <property type="entry name" value="ZYBPT5"/>
</dbReference>
<dbReference type="RefSeq" id="YP_006985.1">
    <property type="nucleotide sequence ID" value="NC_005859.1"/>
</dbReference>
<dbReference type="PDB" id="8A8C">
    <property type="method" value="EM"/>
    <property type="resolution" value="3.10 A"/>
    <property type="chains" value="B=1-640"/>
</dbReference>
<dbReference type="PDB" id="8B14">
    <property type="method" value="EM"/>
    <property type="resolution" value="2.60 A"/>
    <property type="chains" value="B=1-640"/>
</dbReference>
<dbReference type="PDBsum" id="8A8C"/>
<dbReference type="PDBsum" id="8B14"/>
<dbReference type="EMDB" id="EMD-15229"/>
<dbReference type="EMDB" id="EMD-15802"/>
<dbReference type="SMR" id="P23207"/>
<dbReference type="GeneID" id="2777681"/>
<dbReference type="KEGG" id="vg:2777681"/>
<dbReference type="Proteomes" id="UP000002107">
    <property type="component" value="Genome"/>
</dbReference>
<dbReference type="Proteomes" id="UP000002141">
    <property type="component" value="Segment"/>
</dbReference>
<dbReference type="Proteomes" id="UP000002503">
    <property type="component" value="Segment"/>
</dbReference>
<dbReference type="GO" id="GO:0098015">
    <property type="term" value="C:virus tail"/>
    <property type="evidence" value="ECO:0007669"/>
    <property type="project" value="UniProtKB-KW"/>
</dbReference>
<dbReference type="GO" id="GO:0098670">
    <property type="term" value="P:entry receptor-mediated virion attachment to host cell"/>
    <property type="evidence" value="ECO:0007669"/>
    <property type="project" value="UniProtKB-KW"/>
</dbReference>
<dbReference type="GO" id="GO:0046813">
    <property type="term" value="P:receptor-mediated virion attachment to host cell"/>
    <property type="evidence" value="ECO:0000314"/>
    <property type="project" value="UniProtKB"/>
</dbReference>
<dbReference type="GO" id="GO:0046718">
    <property type="term" value="P:symbiont entry into host cell"/>
    <property type="evidence" value="ECO:0007669"/>
    <property type="project" value="UniProtKB-KW"/>
</dbReference>
<reference key="1">
    <citation type="journal article" date="1991" name="J. Bacteriol.">
        <title>Cloning, sequencing, and recombinational analysis with bacteriophage BF23 of the bacteriophage T5 oad gene encoding the receptor-binding protein.</title>
        <authorList>
            <person name="Krauel V."/>
            <person name="Heller K.J."/>
        </authorList>
    </citation>
    <scope>NUCLEOTIDE SEQUENCE [GENOMIC DNA]</scope>
</reference>
<reference key="2">
    <citation type="submission" date="2004-01" db="EMBL/GenBank/DDBJ databases">
        <title>Bacteriophage T5 complete genome.</title>
        <authorList>
            <person name="Ksenzenko V.N."/>
            <person name="Kaliman A.V."/>
            <person name="Krutilina A.I."/>
            <person name="Shlyapnikov M.G."/>
        </authorList>
    </citation>
    <scope>NUCLEOTIDE SEQUENCE [LARGE SCALE GENOMIC DNA]</scope>
    <scope>INDUCTION</scope>
</reference>
<reference key="3">
    <citation type="journal article" date="2005" name="Virology">
        <title>Complete genome sequence of bacteriophage T5.</title>
        <authorList>
            <person name="Wang J."/>
            <person name="Jiang Y."/>
            <person name="Vincent M."/>
            <person name="Sun Y."/>
            <person name="Yu H."/>
            <person name="Wang J."/>
            <person name="Bao Q."/>
            <person name="Kong H."/>
            <person name="Hu S."/>
        </authorList>
    </citation>
    <scope>NUCLEOTIDE SEQUENCE [LARGE SCALE GENOMIC DNA]</scope>
    <source>
        <strain>ATCC 11303-B5</strain>
    </source>
</reference>
<reference key="4">
    <citation type="journal article" date="2014" name="J. Virol.">
        <title>Insights into bacteriophage T5 structure from analysis of its morphogenesis genes and protein components.</title>
        <authorList>
            <person name="Zivanovic Y."/>
            <person name="Confalonieri F."/>
            <person name="Ponchon L."/>
            <person name="Lurz R."/>
            <person name="Chami M."/>
            <person name="Flayhan A."/>
            <person name="Renouard M."/>
            <person name="Huet A."/>
            <person name="Decottignies P."/>
            <person name="Davidson A.R."/>
            <person name="Breyton C."/>
            <person name="Boulanger P."/>
        </authorList>
    </citation>
    <scope>NUCLEOTIDE SEQUENCE [LARGE SCALE GENOMIC DNA]</scope>
    <scope>SUBCELLULAR LOCATION</scope>
    <source>
        <strain>St0 deletion mutant</strain>
    </source>
</reference>
<reference key="5">
    <citation type="journal article" date="1994" name="Mol. Microbiol.">
        <title>Lytic conversion of Escherichia coli by bacteriophage T5: blocking of the FhuA receptor protein by a lipoprotein expressed early during infection.</title>
        <authorList>
            <person name="Decker K."/>
            <person name="Krauel V."/>
            <person name="Meesmann A."/>
            <person name="Heller K.J."/>
        </authorList>
    </citation>
    <scope>NUCLEOTIDE SEQUENCE [GENOMIC DNA] OF 1-21</scope>
</reference>
<reference key="6">
    <citation type="journal article" date="2002" name="J. Mol. Biol.">
        <title>Characterization of a high-affinity complex between the bacterial outer membrane protein FhuA and the phage T5 protein pb5.</title>
        <authorList>
            <person name="Plancon L."/>
            <person name="Janmot C."/>
            <person name="le Maire M."/>
            <person name="Desmadril M."/>
            <person name="Bonhivers M."/>
            <person name="Letellier L."/>
            <person name="Boulanger P."/>
        </authorList>
    </citation>
    <scope>INTERACTION WITH HOST FHUA RECEPTOR</scope>
    <scope>SUBUNIT</scope>
    <scope>FUNCTION</scope>
</reference>
<reference key="7">
    <citation type="journal article" date="2012" name="Biochimie">
        <title>New insights into pb5, the receptor binding protein of bacteriophage T5, and its interaction with its Escherichia coli receptor FhuA.</title>
        <authorList>
            <person name="Flayhan A."/>
            <person name="Wien F."/>
            <person name="Paternostre M."/>
            <person name="Boulanger P."/>
            <person name="Breyton C."/>
        </authorList>
    </citation>
    <scope>FUNCTION</scope>
</reference>
<reference key="8">
    <citation type="journal article" date="2013" name="J. Biol. Chem.">
        <title>Assessing the conformational changes of pb5, the receptor-binding protein of phage T5, upon binding to its Escherichia coli receptor FhuA.</title>
        <authorList>
            <person name="Breyton C."/>
            <person name="Flayhan A."/>
            <person name="Gabel F."/>
            <person name="Lethier M."/>
            <person name="Durand G."/>
            <person name="Boulanger P."/>
            <person name="Chami M."/>
            <person name="Ebel C."/>
        </authorList>
    </citation>
    <scope>FUNCTION</scope>
</reference>
<reference evidence="13" key="9">
    <citation type="journal article" date="2022" name="Proc. Natl. Acad. Sci. U.S.A.">
        <title>Structural basis for host recognition and superinfection exclusion by bacteriophage T5.</title>
        <authorList>
            <person name="van den Berg B."/>
            <person name="Silale A."/>
            <person name="Basle A."/>
            <person name="Brandner A.F."/>
            <person name="Mader S.L."/>
            <person name="Khalid S."/>
        </authorList>
    </citation>
    <scope>STRUCTURE BY ELECTRON MICROSCOPY (3.10 ANGSTROMS)</scope>
    <scope>SUBUNIT</scope>
    <scope>INTERACTION WITH HOST FHUA RECEPTOR</scope>
</reference>
<reference evidence="14" key="10">
    <citation type="journal article" date="2023" name="J. Virol.">
        <title>Deciphering Bacteriophage T5 Host Recognition Mechanism and Infection Trigger.</title>
        <authorList>
            <person name="Degroux S."/>
            <person name="Effantin G."/>
            <person name="Linares R."/>
            <person name="Schoehn G."/>
            <person name="Breyton C."/>
        </authorList>
    </citation>
    <scope>STRUCTURE BY ELECTRON MICROSCOPY (2.60 ANGSTROMS)</scope>
    <scope>INTERACTION WITH HOST FHUA RECEPTOR</scope>
    <scope>FUNCTION</scope>
</reference>
<reference key="11">
    <citation type="journal article" date="2023" name="Sci. Adv.">
        <title>Structural basis of bacteriophage T5 infection trigger and E. coli cell wall perforation.</title>
        <authorList>
            <person name="Linares R."/>
            <person name="Arnaud C.A."/>
            <person name="Effantin G."/>
            <person name="Darnault C."/>
            <person name="Epalle N.H."/>
            <person name="Boeri Erba E."/>
            <person name="Schoehn G."/>
            <person name="Breyton C."/>
        </authorList>
    </citation>
    <scope>FUNCTION</scope>
    <scope>INTERACTION WITH STRAIGHT FIBER PROTEIN PB4</scope>
</reference>
<accession>P23207</accession>
<accession>Q6QGD0</accession>
<feature type="chain" id="PRO_0000165219" description="Receptor-binding protein pb5">
    <location>
        <begin position="1"/>
        <end position="640"/>
    </location>
</feature>
<feature type="region of interest" description="Interaction with host FhuA" evidence="6">
    <location>
        <begin position="571"/>
        <end position="580"/>
    </location>
</feature>
<feature type="site" description="Interaction with host FhuA receptor" evidence="6">
    <location>
        <position position="166"/>
    </location>
</feature>
<feature type="sequence conflict" description="In Ref. 1; AAA32559." evidence="9" ref="1">
    <original>A</original>
    <variation>T</variation>
    <location>
        <position position="431"/>
    </location>
</feature>
<feature type="strand" evidence="16">
    <location>
        <begin position="44"/>
        <end position="52"/>
    </location>
</feature>
<feature type="turn" evidence="15">
    <location>
        <begin position="56"/>
        <end position="61"/>
    </location>
</feature>
<feature type="strand" evidence="16">
    <location>
        <begin position="63"/>
        <end position="66"/>
    </location>
</feature>
<feature type="helix" evidence="16">
    <location>
        <begin position="69"/>
        <end position="77"/>
    </location>
</feature>
<feature type="strand" evidence="16">
    <location>
        <begin position="81"/>
        <end position="89"/>
    </location>
</feature>
<feature type="strand" evidence="16">
    <location>
        <begin position="94"/>
        <end position="96"/>
    </location>
</feature>
<feature type="strand" evidence="16">
    <location>
        <begin position="99"/>
        <end position="109"/>
    </location>
</feature>
<feature type="turn" evidence="16">
    <location>
        <begin position="114"/>
        <end position="116"/>
    </location>
</feature>
<feature type="strand" evidence="16">
    <location>
        <begin position="117"/>
        <end position="139"/>
    </location>
</feature>
<feature type="strand" evidence="16">
    <location>
        <begin position="143"/>
        <end position="145"/>
    </location>
</feature>
<feature type="helix" evidence="16">
    <location>
        <begin position="147"/>
        <end position="150"/>
    </location>
</feature>
<feature type="helix" evidence="16">
    <location>
        <begin position="151"/>
        <end position="153"/>
    </location>
</feature>
<feature type="strand" evidence="15">
    <location>
        <begin position="154"/>
        <end position="156"/>
    </location>
</feature>
<feature type="strand" evidence="16">
    <location>
        <begin position="157"/>
        <end position="169"/>
    </location>
</feature>
<feature type="turn" evidence="16">
    <location>
        <begin position="174"/>
        <end position="176"/>
    </location>
</feature>
<feature type="helix" evidence="16">
    <location>
        <begin position="177"/>
        <end position="182"/>
    </location>
</feature>
<feature type="strand" evidence="16">
    <location>
        <begin position="190"/>
        <end position="192"/>
    </location>
</feature>
<feature type="helix" evidence="16">
    <location>
        <begin position="196"/>
        <end position="198"/>
    </location>
</feature>
<feature type="helix" evidence="16">
    <location>
        <begin position="204"/>
        <end position="206"/>
    </location>
</feature>
<feature type="strand" evidence="16">
    <location>
        <begin position="219"/>
        <end position="225"/>
    </location>
</feature>
<feature type="strand" evidence="16">
    <location>
        <begin position="229"/>
        <end position="231"/>
    </location>
</feature>
<feature type="strand" evidence="16">
    <location>
        <begin position="245"/>
        <end position="248"/>
    </location>
</feature>
<feature type="strand" evidence="16">
    <location>
        <begin position="250"/>
        <end position="258"/>
    </location>
</feature>
<feature type="strand" evidence="16">
    <location>
        <begin position="267"/>
        <end position="275"/>
    </location>
</feature>
<feature type="strand" evidence="16">
    <location>
        <begin position="281"/>
        <end position="283"/>
    </location>
</feature>
<feature type="helix" evidence="15">
    <location>
        <begin position="292"/>
        <end position="294"/>
    </location>
</feature>
<feature type="strand" evidence="16">
    <location>
        <begin position="298"/>
        <end position="300"/>
    </location>
</feature>
<feature type="strand" evidence="16">
    <location>
        <begin position="308"/>
        <end position="320"/>
    </location>
</feature>
<feature type="strand" evidence="16">
    <location>
        <begin position="322"/>
        <end position="327"/>
    </location>
</feature>
<feature type="strand" evidence="16">
    <location>
        <begin position="357"/>
        <end position="360"/>
    </location>
</feature>
<feature type="strand" evidence="16">
    <location>
        <begin position="374"/>
        <end position="384"/>
    </location>
</feature>
<feature type="strand" evidence="16">
    <location>
        <begin position="398"/>
        <end position="401"/>
    </location>
</feature>
<feature type="strand" evidence="16">
    <location>
        <begin position="407"/>
        <end position="411"/>
    </location>
</feature>
<feature type="strand" evidence="16">
    <location>
        <begin position="416"/>
        <end position="425"/>
    </location>
</feature>
<feature type="strand" evidence="16">
    <location>
        <begin position="464"/>
        <end position="468"/>
    </location>
</feature>
<feature type="strand" evidence="16">
    <location>
        <begin position="470"/>
        <end position="485"/>
    </location>
</feature>
<feature type="strand" evidence="16">
    <location>
        <begin position="490"/>
        <end position="493"/>
    </location>
</feature>
<feature type="strand" evidence="16">
    <location>
        <begin position="496"/>
        <end position="503"/>
    </location>
</feature>
<feature type="helix" evidence="16">
    <location>
        <begin position="507"/>
        <end position="510"/>
    </location>
</feature>
<feature type="strand" evidence="15">
    <location>
        <begin position="512"/>
        <end position="517"/>
    </location>
</feature>
<feature type="helix" evidence="16">
    <location>
        <begin position="519"/>
        <end position="522"/>
    </location>
</feature>
<feature type="strand" evidence="15">
    <location>
        <begin position="524"/>
        <end position="526"/>
    </location>
</feature>
<feature type="strand" evidence="16">
    <location>
        <begin position="543"/>
        <end position="550"/>
    </location>
</feature>
<feature type="strand" evidence="16">
    <location>
        <begin position="556"/>
        <end position="568"/>
    </location>
</feature>
<feature type="strand" evidence="16">
    <location>
        <begin position="575"/>
        <end position="578"/>
    </location>
</feature>
<feature type="strand" evidence="16">
    <location>
        <begin position="582"/>
        <end position="585"/>
    </location>
</feature>
<feature type="helix" evidence="15">
    <location>
        <begin position="588"/>
        <end position="590"/>
    </location>
</feature>
<feature type="strand" evidence="16">
    <location>
        <begin position="593"/>
        <end position="605"/>
    </location>
</feature>
<feature type="strand" evidence="16">
    <location>
        <begin position="607"/>
        <end position="609"/>
    </location>
</feature>
<feature type="strand" evidence="16">
    <location>
        <begin position="611"/>
        <end position="621"/>
    </location>
</feature>
<feature type="strand" evidence="16">
    <location>
        <begin position="625"/>
        <end position="628"/>
    </location>
</feature>
<feature type="strand" evidence="16">
    <location>
        <begin position="632"/>
        <end position="639"/>
    </location>
</feature>
<name>RBP5_BPT5</name>
<proteinExistence type="evidence at protein level"/>
<comment type="function">
    <text evidence="1 2 3 6 7">Structural component of the distal part of the tail. Mediates T5 irreversible binding to its host entry receptor, the E.coli outer membrane ferrichrome transporter FhuA protein (PubMed:12051859, PubMed:22659573, PubMed:36779755). Upon binding to host FhuA, pb5 undergoes conformational changes that are probably the key to the transmission of the signal through the tail to the capsid, triggering DNA release (PubMed:24014030, PubMed:36779755, PubMed:36961893).</text>
</comment>
<comment type="subunit">
    <text evidence="1 5 6 10">Monomer (PubMed:12051859, PubMed:36215462, PubMed:36779755). Interacts with straight fiber protein pb4 (Probable). Interacts with the host FhuA receptor; this interaction is necessary for the entry of the viral genome into the host cell (PubMed:12051859, PubMed:36215462, PubMed:36779755).</text>
</comment>
<comment type="subcellular location">
    <subcellularLocation>
        <location evidence="4 6">Virion</location>
    </subcellularLocation>
    <text evidence="6">Localizes at the tip of the central tail fiber.</text>
</comment>
<comment type="miscellaneous">
    <text>Only small regions of the protein may be involved in protein-protein interactions in the tail structure, the major part being used in receptor binding.</text>
</comment>
<organismHost>
    <name type="scientific">Escherichia coli</name>
    <dbReference type="NCBI Taxonomy" id="562"/>
</organismHost>
<evidence type="ECO:0000269" key="1">
    <source>
    </source>
</evidence>
<evidence type="ECO:0000269" key="2">
    <source>
    </source>
</evidence>
<evidence type="ECO:0000269" key="3">
    <source>
    </source>
</evidence>
<evidence type="ECO:0000269" key="4">
    <source>
    </source>
</evidence>
<evidence type="ECO:0000269" key="5">
    <source>
    </source>
</evidence>
<evidence type="ECO:0000269" key="6">
    <source>
    </source>
</evidence>
<evidence type="ECO:0000269" key="7">
    <source>
    </source>
</evidence>
<evidence type="ECO:0000303" key="8">
    <source>
    </source>
</evidence>
<evidence type="ECO:0000305" key="9"/>
<evidence type="ECO:0000305" key="10">
    <source>
    </source>
</evidence>
<evidence type="ECO:0000312" key="11">
    <source>
        <dbReference type="EMBL" id="AAS77196.1"/>
    </source>
</evidence>
<evidence type="ECO:0000312" key="12">
    <source>
        <dbReference type="EMBL" id="AAU05292.1"/>
    </source>
</evidence>
<evidence type="ECO:0007744" key="13">
    <source>
        <dbReference type="PDB" id="8A8C"/>
    </source>
</evidence>
<evidence type="ECO:0007744" key="14">
    <source>
        <dbReference type="PDB" id="8B14"/>
    </source>
</evidence>
<evidence type="ECO:0007829" key="15">
    <source>
        <dbReference type="PDB" id="8A8C"/>
    </source>
</evidence>
<evidence type="ECO:0007829" key="16">
    <source>
        <dbReference type="PDB" id="8B14"/>
    </source>
</evidence>
<keyword id="KW-0002">3D-structure</keyword>
<keyword id="KW-0945">Host-virus interaction</keyword>
<keyword id="KW-0426">Late protein</keyword>
<keyword id="KW-1185">Reference proteome</keyword>
<keyword id="KW-1161">Viral attachment to host cell</keyword>
<keyword id="KW-1234">Viral attachment to host entry receptor</keyword>
<keyword id="KW-1227">Viral tail protein</keyword>
<keyword id="KW-0946">Virion</keyword>
<keyword id="KW-1160">Virus entry into host cell</keyword>
<sequence>MSFFAGKLNNKSILSLRRGSGGDTNQHINPDSQTIFHSDMSHVIITETHSTGLRLDQGAGDYYWSEMPSRVTQLHNNDPNRVVLTEIEFSDGSRHMLSGMSMGVGAKAYGIINPQIMSQGGLKTQITASADLSLDVGYFNTGTSGTIPQKLRDGTGCQHMFGAFSGRRGFASSAMYLGGAALYKSAWSGSGYVVADAGTLTIPSDYVRHPGARNFGFNAIYVRGRSCNRVLYGMEGPNYTTGGAVQGASSSGALNFTYNPSNPESPKYSVGFARADPTNYAYWESMGDPNDSANGPIGIYSEHLGIYPSKITWYVTNLVYNGSGYNIDGGLFNGNDIKLSPREFIIKGVNVNNTSWKFINFIEKNFNVGNRADFRDVGCNLSKDSPSTGISGIATFGLPTTESNNAPSIKGGNVGGLHANVVSIYNFLPSASWYVSSNPPKIGNNYGDVWSENLLPLRLLGGSGSTILSGNIVFQGNGSVHVGTVGLDLNSSRNGAIVCTMEFIDDTWLSAGGIGCFNPTEMLSQGAEYGDSRFRIGGNTINKKLHQILSLPAGEYVPFFTIKGTVVNACKLQAAAYNPTPYWVSGLPGSVGQTGYYTLTYYMRNDGNNNISIWLDSSMSNIIGMKACLPNIKLIIQRLT</sequence>
<organism>
    <name type="scientific">Escherichia phage T5</name>
    <name type="common">Enterobacteria phage T5</name>
    <dbReference type="NCBI Taxonomy" id="2695836"/>
    <lineage>
        <taxon>Viruses</taxon>
        <taxon>Duplodnaviria</taxon>
        <taxon>Heunggongvirae</taxon>
        <taxon>Uroviricota</taxon>
        <taxon>Caudoviricetes</taxon>
        <taxon>Demerecviridae</taxon>
        <taxon>Markadamsvirinae</taxon>
        <taxon>Tequintavirus</taxon>
        <taxon>Tequintavirus T5</taxon>
    </lineage>
</organism>